<dbReference type="EC" id="2.3.1.274" evidence="1"/>
<dbReference type="EMBL" id="CP000482">
    <property type="protein sequence ID" value="ABK99353.1"/>
    <property type="molecule type" value="Genomic_DNA"/>
</dbReference>
<dbReference type="RefSeq" id="WP_011735630.1">
    <property type="nucleotide sequence ID" value="NC_008609.1"/>
</dbReference>
<dbReference type="SMR" id="A1APT3"/>
<dbReference type="STRING" id="338966.Ppro_1741"/>
<dbReference type="KEGG" id="ppd:Ppro_1741"/>
<dbReference type="eggNOG" id="COG0416">
    <property type="taxonomic scope" value="Bacteria"/>
</dbReference>
<dbReference type="HOGENOM" id="CLU_039379_1_1_7"/>
<dbReference type="OrthoDB" id="9806408at2"/>
<dbReference type="UniPathway" id="UPA00085"/>
<dbReference type="Proteomes" id="UP000006732">
    <property type="component" value="Chromosome"/>
</dbReference>
<dbReference type="GO" id="GO:0005737">
    <property type="term" value="C:cytoplasm"/>
    <property type="evidence" value="ECO:0007669"/>
    <property type="project" value="UniProtKB-SubCell"/>
</dbReference>
<dbReference type="GO" id="GO:0043811">
    <property type="term" value="F:phosphate:acyl-[acyl carrier protein] acyltransferase activity"/>
    <property type="evidence" value="ECO:0007669"/>
    <property type="project" value="UniProtKB-UniRule"/>
</dbReference>
<dbReference type="GO" id="GO:0006633">
    <property type="term" value="P:fatty acid biosynthetic process"/>
    <property type="evidence" value="ECO:0007669"/>
    <property type="project" value="UniProtKB-UniRule"/>
</dbReference>
<dbReference type="GO" id="GO:0008654">
    <property type="term" value="P:phospholipid biosynthetic process"/>
    <property type="evidence" value="ECO:0007669"/>
    <property type="project" value="UniProtKB-KW"/>
</dbReference>
<dbReference type="Gene3D" id="3.40.718.10">
    <property type="entry name" value="Isopropylmalate Dehydrogenase"/>
    <property type="match status" value="1"/>
</dbReference>
<dbReference type="HAMAP" id="MF_00019">
    <property type="entry name" value="PlsX"/>
    <property type="match status" value="1"/>
</dbReference>
<dbReference type="InterPro" id="IPR003664">
    <property type="entry name" value="FA_synthesis"/>
</dbReference>
<dbReference type="InterPro" id="IPR012281">
    <property type="entry name" value="Phospholipid_synth_PlsX-like"/>
</dbReference>
<dbReference type="NCBIfam" id="TIGR00182">
    <property type="entry name" value="plsX"/>
    <property type="match status" value="1"/>
</dbReference>
<dbReference type="PANTHER" id="PTHR30100">
    <property type="entry name" value="FATTY ACID/PHOSPHOLIPID SYNTHESIS PROTEIN PLSX"/>
    <property type="match status" value="1"/>
</dbReference>
<dbReference type="PANTHER" id="PTHR30100:SF1">
    <property type="entry name" value="PHOSPHATE ACYLTRANSFERASE"/>
    <property type="match status" value="1"/>
</dbReference>
<dbReference type="Pfam" id="PF02504">
    <property type="entry name" value="FA_synthesis"/>
    <property type="match status" value="1"/>
</dbReference>
<dbReference type="PIRSF" id="PIRSF002465">
    <property type="entry name" value="Phsphlp_syn_PlsX"/>
    <property type="match status" value="1"/>
</dbReference>
<dbReference type="SUPFAM" id="SSF53659">
    <property type="entry name" value="Isocitrate/Isopropylmalate dehydrogenase-like"/>
    <property type="match status" value="1"/>
</dbReference>
<sequence length="346" mass="37285">MRIAVDAMGGDNAPTIEVEGAVAACREFGIPITLVGDQERLRKELELHHCSGLDIDIFHASEVVGMHDSASDAIRRKKNSSVRLAFELVKEGKACAAVSAGNSGATMAAGMFVLKRIKGIDRPAIAQVFPTLKGKTLVLDIGGTVDCKPIHLAQFAIMGEVYARYVMGIADPVVGLLSNGEEESKGNELTRETNTLLRKTSLNYAGYIEGRDIFKGQIDVVVCDGFVGNIVLKLSEGLADAAGRMLKQEILKSWVSKLGYLFVRGAFKRFRRIVDYAEYGGAPLLGINGVGMICHGGSSVKAIKNAIRLAEEYARNGVAEHVVEKLSENHIESLQRDNAKLQAVGE</sequence>
<accession>A1APT3</accession>
<name>PLSX_PELPD</name>
<protein>
    <recommendedName>
        <fullName evidence="1">Phosphate acyltransferase</fullName>
        <ecNumber evidence="1">2.3.1.274</ecNumber>
    </recommendedName>
    <alternativeName>
        <fullName evidence="1">Acyl-ACP phosphotransacylase</fullName>
    </alternativeName>
    <alternativeName>
        <fullName evidence="1">Acyl-[acyl-carrier-protein]--phosphate acyltransferase</fullName>
    </alternativeName>
    <alternativeName>
        <fullName evidence="1">Phosphate-acyl-ACP acyltransferase</fullName>
    </alternativeName>
</protein>
<comment type="function">
    <text evidence="1">Catalyzes the reversible formation of acyl-phosphate (acyl-PO(4)) from acyl-[acyl-carrier-protein] (acyl-ACP). This enzyme utilizes acyl-ACP as fatty acyl donor, but not acyl-CoA.</text>
</comment>
<comment type="catalytic activity">
    <reaction evidence="1">
        <text>a fatty acyl-[ACP] + phosphate = an acyl phosphate + holo-[ACP]</text>
        <dbReference type="Rhea" id="RHEA:42292"/>
        <dbReference type="Rhea" id="RHEA-COMP:9685"/>
        <dbReference type="Rhea" id="RHEA-COMP:14125"/>
        <dbReference type="ChEBI" id="CHEBI:43474"/>
        <dbReference type="ChEBI" id="CHEBI:59918"/>
        <dbReference type="ChEBI" id="CHEBI:64479"/>
        <dbReference type="ChEBI" id="CHEBI:138651"/>
        <dbReference type="EC" id="2.3.1.274"/>
    </reaction>
</comment>
<comment type="pathway">
    <text evidence="1">Lipid metabolism; phospholipid metabolism.</text>
</comment>
<comment type="subunit">
    <text evidence="1">Homodimer. Probably interacts with PlsY.</text>
</comment>
<comment type="subcellular location">
    <subcellularLocation>
        <location evidence="1">Cytoplasm</location>
    </subcellularLocation>
    <text evidence="1">Associated with the membrane possibly through PlsY.</text>
</comment>
<comment type="similarity">
    <text evidence="1">Belongs to the PlsX family.</text>
</comment>
<reference key="1">
    <citation type="submission" date="2006-10" db="EMBL/GenBank/DDBJ databases">
        <title>Complete sequence of chromosome of Pelobacter propionicus DSM 2379.</title>
        <authorList>
            <consortium name="US DOE Joint Genome Institute"/>
            <person name="Copeland A."/>
            <person name="Lucas S."/>
            <person name="Lapidus A."/>
            <person name="Barry K."/>
            <person name="Detter J.C."/>
            <person name="Glavina del Rio T."/>
            <person name="Hammon N."/>
            <person name="Israni S."/>
            <person name="Dalin E."/>
            <person name="Tice H."/>
            <person name="Pitluck S."/>
            <person name="Saunders E."/>
            <person name="Brettin T."/>
            <person name="Bruce D."/>
            <person name="Han C."/>
            <person name="Tapia R."/>
            <person name="Schmutz J."/>
            <person name="Larimer F."/>
            <person name="Land M."/>
            <person name="Hauser L."/>
            <person name="Kyrpides N."/>
            <person name="Kim E."/>
            <person name="Lovley D."/>
            <person name="Richardson P."/>
        </authorList>
    </citation>
    <scope>NUCLEOTIDE SEQUENCE [LARGE SCALE GENOMIC DNA]</scope>
    <source>
        <strain>DSM 2379 / NBRC 103807 / OttBd1</strain>
    </source>
</reference>
<evidence type="ECO:0000255" key="1">
    <source>
        <dbReference type="HAMAP-Rule" id="MF_00019"/>
    </source>
</evidence>
<feature type="chain" id="PRO_1000001798" description="Phosphate acyltransferase">
    <location>
        <begin position="1"/>
        <end position="346"/>
    </location>
</feature>
<gene>
    <name evidence="1" type="primary">plsX</name>
    <name type="ordered locus">Ppro_1741</name>
</gene>
<keyword id="KW-0963">Cytoplasm</keyword>
<keyword id="KW-0444">Lipid biosynthesis</keyword>
<keyword id="KW-0443">Lipid metabolism</keyword>
<keyword id="KW-0594">Phospholipid biosynthesis</keyword>
<keyword id="KW-1208">Phospholipid metabolism</keyword>
<keyword id="KW-1185">Reference proteome</keyword>
<keyword id="KW-0808">Transferase</keyword>
<organism>
    <name type="scientific">Pelobacter propionicus (strain DSM 2379 / NBRC 103807 / OttBd1)</name>
    <dbReference type="NCBI Taxonomy" id="338966"/>
    <lineage>
        <taxon>Bacteria</taxon>
        <taxon>Pseudomonadati</taxon>
        <taxon>Thermodesulfobacteriota</taxon>
        <taxon>Desulfuromonadia</taxon>
        <taxon>Desulfuromonadales</taxon>
        <taxon>Desulfuromonadaceae</taxon>
        <taxon>Pelobacter</taxon>
    </lineage>
</organism>
<proteinExistence type="inferred from homology"/>